<protein>
    <recommendedName>
        <fullName evidence="1">Bifunctional purine biosynthesis protein PurH</fullName>
    </recommendedName>
    <domain>
        <recommendedName>
            <fullName evidence="1">Phosphoribosylaminoimidazolecarboxamide formyltransferase</fullName>
            <ecNumber evidence="1">2.1.2.3</ecNumber>
        </recommendedName>
        <alternativeName>
            <fullName evidence="1">AICAR transformylase</fullName>
        </alternativeName>
    </domain>
    <domain>
        <recommendedName>
            <fullName evidence="1">IMP cyclohydrolase</fullName>
            <ecNumber evidence="1">3.5.4.10</ecNumber>
        </recommendedName>
        <alternativeName>
            <fullName evidence="1">ATIC</fullName>
        </alternativeName>
        <alternativeName>
            <fullName evidence="1">IMP synthase</fullName>
        </alternativeName>
        <alternativeName>
            <fullName evidence="1">Inosinicase</fullName>
        </alternativeName>
    </domain>
</protein>
<sequence>MIGEERVVRALMSVYDKTGIVEFAQALHNLGIEIISTGQTQRVLREAGIPALPVSDVTGFPEILDGRVKTLHPAIHAGLLARRDVPAHMAELAAHNLQPIDLVVVNLYPFAATIARPDVTMAEAQEQIDIGGVALLRAAAKNFPAVLVLVDPADYAGVLDGLRAGDVPLSERQRLAAKAFAHTAEYDATIAAYLRTEPLPDVLPLAWRKYQPLRYGENPHQAAALYGDFGAFFHQLHGKELSYNNILDTAAAQELIEEFPATEAAAVAIIKHTNPCGVAIAADLHRAWEAAFATDREAPFGGIIAVNRPVDIAFAEAVDEIFSEIIIAPDFAPDALALLRRKKNRRLLQSVRPITGADRWQLRSVPGGVLVQEPDHAPLVAEEWRVVTKRAPTDAEAAALRFAWRVVKHVKSNAIVYAAHDRTLGIGAGQMSRVDSSRLAVWKAQQAGIDLRGSVVASDALFPFADGVEAAIAAGATAIIQPGGSVRDEEVIAAADAAGAAMVFTGRRHFRH</sequence>
<gene>
    <name evidence="1" type="primary">purH</name>
    <name type="ordered locus">Caur_2058</name>
</gene>
<feature type="chain" id="PRO_1000076477" description="Bifunctional purine biosynthesis protein PurH">
    <location>
        <begin position="1"/>
        <end position="512"/>
    </location>
</feature>
<feature type="domain" description="MGS-like" evidence="2">
    <location>
        <begin position="1"/>
        <end position="150"/>
    </location>
</feature>
<proteinExistence type="inferred from homology"/>
<dbReference type="EC" id="2.1.2.3" evidence="1"/>
<dbReference type="EC" id="3.5.4.10" evidence="1"/>
<dbReference type="EMBL" id="CP000909">
    <property type="protein sequence ID" value="ABY35270.1"/>
    <property type="molecule type" value="Genomic_DNA"/>
</dbReference>
<dbReference type="RefSeq" id="YP_001635659.1">
    <property type="nucleotide sequence ID" value="NC_010175.1"/>
</dbReference>
<dbReference type="SMR" id="A9WEK8"/>
<dbReference type="FunCoup" id="A9WEK8">
    <property type="interactions" value="460"/>
</dbReference>
<dbReference type="STRING" id="324602.Caur_2058"/>
<dbReference type="EnsemblBacteria" id="ABY35270">
    <property type="protein sequence ID" value="ABY35270"/>
    <property type="gene ID" value="Caur_2058"/>
</dbReference>
<dbReference type="KEGG" id="cau:Caur_2058"/>
<dbReference type="PATRIC" id="fig|324602.8.peg.2336"/>
<dbReference type="eggNOG" id="COG0138">
    <property type="taxonomic scope" value="Bacteria"/>
</dbReference>
<dbReference type="HOGENOM" id="CLU_016316_5_2_0"/>
<dbReference type="InParanoid" id="A9WEK8"/>
<dbReference type="UniPathway" id="UPA00074">
    <property type="reaction ID" value="UER00133"/>
</dbReference>
<dbReference type="UniPathway" id="UPA00074">
    <property type="reaction ID" value="UER00135"/>
</dbReference>
<dbReference type="Proteomes" id="UP000002008">
    <property type="component" value="Chromosome"/>
</dbReference>
<dbReference type="GO" id="GO:0005829">
    <property type="term" value="C:cytosol"/>
    <property type="evidence" value="ECO:0000318"/>
    <property type="project" value="GO_Central"/>
</dbReference>
<dbReference type="GO" id="GO:0003937">
    <property type="term" value="F:IMP cyclohydrolase activity"/>
    <property type="evidence" value="ECO:0000318"/>
    <property type="project" value="GO_Central"/>
</dbReference>
<dbReference type="GO" id="GO:0004643">
    <property type="term" value="F:phosphoribosylaminoimidazolecarboxamide formyltransferase activity"/>
    <property type="evidence" value="ECO:0000318"/>
    <property type="project" value="GO_Central"/>
</dbReference>
<dbReference type="GO" id="GO:0006189">
    <property type="term" value="P:'de novo' IMP biosynthetic process"/>
    <property type="evidence" value="ECO:0000318"/>
    <property type="project" value="GO_Central"/>
</dbReference>
<dbReference type="CDD" id="cd01421">
    <property type="entry name" value="IMPCH"/>
    <property type="match status" value="1"/>
</dbReference>
<dbReference type="FunFam" id="3.40.140.20:FF:000001">
    <property type="entry name" value="Bifunctional purine biosynthesis protein PurH"/>
    <property type="match status" value="1"/>
</dbReference>
<dbReference type="FunFam" id="3.40.140.20:FF:000005">
    <property type="entry name" value="Bifunctional purine biosynthesis protein PurH"/>
    <property type="match status" value="1"/>
</dbReference>
<dbReference type="FunFam" id="3.40.50.1380:FF:000001">
    <property type="entry name" value="Bifunctional purine biosynthesis protein PurH"/>
    <property type="match status" value="1"/>
</dbReference>
<dbReference type="Gene3D" id="3.40.140.20">
    <property type="match status" value="2"/>
</dbReference>
<dbReference type="Gene3D" id="3.40.50.1380">
    <property type="entry name" value="Methylglyoxal synthase-like domain"/>
    <property type="match status" value="1"/>
</dbReference>
<dbReference type="HAMAP" id="MF_00139">
    <property type="entry name" value="PurH"/>
    <property type="match status" value="1"/>
</dbReference>
<dbReference type="InterPro" id="IPR024051">
    <property type="entry name" value="AICAR_Tfase_dup_dom_sf"/>
</dbReference>
<dbReference type="InterPro" id="IPR016193">
    <property type="entry name" value="Cytidine_deaminase-like"/>
</dbReference>
<dbReference type="InterPro" id="IPR011607">
    <property type="entry name" value="MGS-like_dom"/>
</dbReference>
<dbReference type="InterPro" id="IPR036914">
    <property type="entry name" value="MGS-like_dom_sf"/>
</dbReference>
<dbReference type="InterPro" id="IPR002695">
    <property type="entry name" value="PurH-like"/>
</dbReference>
<dbReference type="NCBIfam" id="NF002049">
    <property type="entry name" value="PRK00881.1"/>
    <property type="match status" value="1"/>
</dbReference>
<dbReference type="NCBIfam" id="TIGR00355">
    <property type="entry name" value="purH"/>
    <property type="match status" value="1"/>
</dbReference>
<dbReference type="PANTHER" id="PTHR11692:SF0">
    <property type="entry name" value="BIFUNCTIONAL PURINE BIOSYNTHESIS PROTEIN ATIC"/>
    <property type="match status" value="1"/>
</dbReference>
<dbReference type="PANTHER" id="PTHR11692">
    <property type="entry name" value="BIFUNCTIONAL PURINE BIOSYNTHESIS PROTEIN PURH"/>
    <property type="match status" value="1"/>
</dbReference>
<dbReference type="Pfam" id="PF01808">
    <property type="entry name" value="AICARFT_IMPCHas"/>
    <property type="match status" value="1"/>
</dbReference>
<dbReference type="Pfam" id="PF02142">
    <property type="entry name" value="MGS"/>
    <property type="match status" value="1"/>
</dbReference>
<dbReference type="PIRSF" id="PIRSF000414">
    <property type="entry name" value="AICARFT_IMPCHas"/>
    <property type="match status" value="1"/>
</dbReference>
<dbReference type="SMART" id="SM00798">
    <property type="entry name" value="AICARFT_IMPCHas"/>
    <property type="match status" value="1"/>
</dbReference>
<dbReference type="SMART" id="SM00851">
    <property type="entry name" value="MGS"/>
    <property type="match status" value="1"/>
</dbReference>
<dbReference type="SUPFAM" id="SSF53927">
    <property type="entry name" value="Cytidine deaminase-like"/>
    <property type="match status" value="1"/>
</dbReference>
<dbReference type="SUPFAM" id="SSF52335">
    <property type="entry name" value="Methylglyoxal synthase-like"/>
    <property type="match status" value="1"/>
</dbReference>
<dbReference type="PROSITE" id="PS51855">
    <property type="entry name" value="MGS"/>
    <property type="match status" value="1"/>
</dbReference>
<organism>
    <name type="scientific">Chloroflexus aurantiacus (strain ATCC 29366 / DSM 635 / J-10-fl)</name>
    <dbReference type="NCBI Taxonomy" id="324602"/>
    <lineage>
        <taxon>Bacteria</taxon>
        <taxon>Bacillati</taxon>
        <taxon>Chloroflexota</taxon>
        <taxon>Chloroflexia</taxon>
        <taxon>Chloroflexales</taxon>
        <taxon>Chloroflexineae</taxon>
        <taxon>Chloroflexaceae</taxon>
        <taxon>Chloroflexus</taxon>
    </lineage>
</organism>
<name>PUR9_CHLAA</name>
<reference key="1">
    <citation type="journal article" date="2011" name="BMC Genomics">
        <title>Complete genome sequence of the filamentous anoxygenic phototrophic bacterium Chloroflexus aurantiacus.</title>
        <authorList>
            <person name="Tang K.H."/>
            <person name="Barry K."/>
            <person name="Chertkov O."/>
            <person name="Dalin E."/>
            <person name="Han C.S."/>
            <person name="Hauser L.J."/>
            <person name="Honchak B.M."/>
            <person name="Karbach L.E."/>
            <person name="Land M.L."/>
            <person name="Lapidus A."/>
            <person name="Larimer F.W."/>
            <person name="Mikhailova N."/>
            <person name="Pitluck S."/>
            <person name="Pierson B.K."/>
            <person name="Blankenship R.E."/>
        </authorList>
    </citation>
    <scope>NUCLEOTIDE SEQUENCE [LARGE SCALE GENOMIC DNA]</scope>
    <source>
        <strain>ATCC 29366 / DSM 635 / J-10-fl</strain>
    </source>
</reference>
<keyword id="KW-0378">Hydrolase</keyword>
<keyword id="KW-0511">Multifunctional enzyme</keyword>
<keyword id="KW-0658">Purine biosynthesis</keyword>
<keyword id="KW-1185">Reference proteome</keyword>
<keyword id="KW-0808">Transferase</keyword>
<comment type="catalytic activity">
    <reaction evidence="1">
        <text>(6R)-10-formyltetrahydrofolate + 5-amino-1-(5-phospho-beta-D-ribosyl)imidazole-4-carboxamide = 5-formamido-1-(5-phospho-D-ribosyl)imidazole-4-carboxamide + (6S)-5,6,7,8-tetrahydrofolate</text>
        <dbReference type="Rhea" id="RHEA:22192"/>
        <dbReference type="ChEBI" id="CHEBI:57453"/>
        <dbReference type="ChEBI" id="CHEBI:58467"/>
        <dbReference type="ChEBI" id="CHEBI:58475"/>
        <dbReference type="ChEBI" id="CHEBI:195366"/>
        <dbReference type="EC" id="2.1.2.3"/>
    </reaction>
</comment>
<comment type="catalytic activity">
    <reaction evidence="1">
        <text>IMP + H2O = 5-formamido-1-(5-phospho-D-ribosyl)imidazole-4-carboxamide</text>
        <dbReference type="Rhea" id="RHEA:18445"/>
        <dbReference type="ChEBI" id="CHEBI:15377"/>
        <dbReference type="ChEBI" id="CHEBI:58053"/>
        <dbReference type="ChEBI" id="CHEBI:58467"/>
        <dbReference type="EC" id="3.5.4.10"/>
    </reaction>
</comment>
<comment type="pathway">
    <text evidence="1">Purine metabolism; IMP biosynthesis via de novo pathway; 5-formamido-1-(5-phospho-D-ribosyl)imidazole-4-carboxamide from 5-amino-1-(5-phospho-D-ribosyl)imidazole-4-carboxamide (10-formyl THF route): step 1/1.</text>
</comment>
<comment type="pathway">
    <text evidence="1">Purine metabolism; IMP biosynthesis via de novo pathway; IMP from 5-formamido-1-(5-phospho-D-ribosyl)imidazole-4-carboxamide: step 1/1.</text>
</comment>
<comment type="domain">
    <text evidence="1">The IMP cyclohydrolase activity resides in the N-terminal region.</text>
</comment>
<comment type="similarity">
    <text evidence="1">Belongs to the PurH family.</text>
</comment>
<evidence type="ECO:0000255" key="1">
    <source>
        <dbReference type="HAMAP-Rule" id="MF_00139"/>
    </source>
</evidence>
<evidence type="ECO:0000255" key="2">
    <source>
        <dbReference type="PROSITE-ProRule" id="PRU01202"/>
    </source>
</evidence>
<accession>A9WEK8</accession>